<accession>Q8K299</accession>
<accession>Q8BZZ2</accession>
<accession>Q8R330</accession>
<accession>Q91WD6</accession>
<accession>Q9CUC3</accession>
<accession>Q9D4G8</accession>
<organism>
    <name type="scientific">Mus musculus</name>
    <name type="common">Mouse</name>
    <dbReference type="NCBI Taxonomy" id="10090"/>
    <lineage>
        <taxon>Eukaryota</taxon>
        <taxon>Metazoa</taxon>
        <taxon>Chordata</taxon>
        <taxon>Craniata</taxon>
        <taxon>Vertebrata</taxon>
        <taxon>Euteleostomi</taxon>
        <taxon>Mammalia</taxon>
        <taxon>Eutheria</taxon>
        <taxon>Euarchontoglires</taxon>
        <taxon>Glires</taxon>
        <taxon>Rodentia</taxon>
        <taxon>Myomorpha</taxon>
        <taxon>Muroidea</taxon>
        <taxon>Muridae</taxon>
        <taxon>Murinae</taxon>
        <taxon>Mus</taxon>
        <taxon>Mus</taxon>
    </lineage>
</organism>
<reference key="1">
    <citation type="journal article" date="2006" name="J. Biol. Chem.">
        <title>Identification and characterization of murine SCARA5, a novel class A scavenger receptor that is expressed by populations of epithelial cells.</title>
        <authorList>
            <person name="Jiang Y."/>
            <person name="Oliver P."/>
            <person name="Davies K.E."/>
            <person name="Platt N."/>
        </authorList>
    </citation>
    <scope>NUCLEOTIDE SEQUENCE [MRNA]</scope>
    <scope>SUBUNIT</scope>
    <scope>TISSUE SPECIFICITY</scope>
    <source>
        <strain>C57BL/6J</strain>
    </source>
</reference>
<reference key="2">
    <citation type="journal article" date="2005" name="Science">
        <title>The transcriptional landscape of the mammalian genome.</title>
        <authorList>
            <person name="Carninci P."/>
            <person name="Kasukawa T."/>
            <person name="Katayama S."/>
            <person name="Gough J."/>
            <person name="Frith M.C."/>
            <person name="Maeda N."/>
            <person name="Oyama R."/>
            <person name="Ravasi T."/>
            <person name="Lenhard B."/>
            <person name="Wells C."/>
            <person name="Kodzius R."/>
            <person name="Shimokawa K."/>
            <person name="Bajic V.B."/>
            <person name="Brenner S.E."/>
            <person name="Batalov S."/>
            <person name="Forrest A.R."/>
            <person name="Zavolan M."/>
            <person name="Davis M.J."/>
            <person name="Wilming L.G."/>
            <person name="Aidinis V."/>
            <person name="Allen J.E."/>
            <person name="Ambesi-Impiombato A."/>
            <person name="Apweiler R."/>
            <person name="Aturaliya R.N."/>
            <person name="Bailey T.L."/>
            <person name="Bansal M."/>
            <person name="Baxter L."/>
            <person name="Beisel K.W."/>
            <person name="Bersano T."/>
            <person name="Bono H."/>
            <person name="Chalk A.M."/>
            <person name="Chiu K.P."/>
            <person name="Choudhary V."/>
            <person name="Christoffels A."/>
            <person name="Clutterbuck D.R."/>
            <person name="Crowe M.L."/>
            <person name="Dalla E."/>
            <person name="Dalrymple B.P."/>
            <person name="de Bono B."/>
            <person name="Della Gatta G."/>
            <person name="di Bernardo D."/>
            <person name="Down T."/>
            <person name="Engstrom P."/>
            <person name="Fagiolini M."/>
            <person name="Faulkner G."/>
            <person name="Fletcher C.F."/>
            <person name="Fukushima T."/>
            <person name="Furuno M."/>
            <person name="Futaki S."/>
            <person name="Gariboldi M."/>
            <person name="Georgii-Hemming P."/>
            <person name="Gingeras T.R."/>
            <person name="Gojobori T."/>
            <person name="Green R.E."/>
            <person name="Gustincich S."/>
            <person name="Harbers M."/>
            <person name="Hayashi Y."/>
            <person name="Hensch T.K."/>
            <person name="Hirokawa N."/>
            <person name="Hill D."/>
            <person name="Huminiecki L."/>
            <person name="Iacono M."/>
            <person name="Ikeo K."/>
            <person name="Iwama A."/>
            <person name="Ishikawa T."/>
            <person name="Jakt M."/>
            <person name="Kanapin A."/>
            <person name="Katoh M."/>
            <person name="Kawasawa Y."/>
            <person name="Kelso J."/>
            <person name="Kitamura H."/>
            <person name="Kitano H."/>
            <person name="Kollias G."/>
            <person name="Krishnan S.P."/>
            <person name="Kruger A."/>
            <person name="Kummerfeld S.K."/>
            <person name="Kurochkin I.V."/>
            <person name="Lareau L.F."/>
            <person name="Lazarevic D."/>
            <person name="Lipovich L."/>
            <person name="Liu J."/>
            <person name="Liuni S."/>
            <person name="McWilliam S."/>
            <person name="Madan Babu M."/>
            <person name="Madera M."/>
            <person name="Marchionni L."/>
            <person name="Matsuda H."/>
            <person name="Matsuzawa S."/>
            <person name="Miki H."/>
            <person name="Mignone F."/>
            <person name="Miyake S."/>
            <person name="Morris K."/>
            <person name="Mottagui-Tabar S."/>
            <person name="Mulder N."/>
            <person name="Nakano N."/>
            <person name="Nakauchi H."/>
            <person name="Ng P."/>
            <person name="Nilsson R."/>
            <person name="Nishiguchi S."/>
            <person name="Nishikawa S."/>
            <person name="Nori F."/>
            <person name="Ohara O."/>
            <person name="Okazaki Y."/>
            <person name="Orlando V."/>
            <person name="Pang K.C."/>
            <person name="Pavan W.J."/>
            <person name="Pavesi G."/>
            <person name="Pesole G."/>
            <person name="Petrovsky N."/>
            <person name="Piazza S."/>
            <person name="Reed J."/>
            <person name="Reid J.F."/>
            <person name="Ring B.Z."/>
            <person name="Ringwald M."/>
            <person name="Rost B."/>
            <person name="Ruan Y."/>
            <person name="Salzberg S.L."/>
            <person name="Sandelin A."/>
            <person name="Schneider C."/>
            <person name="Schoenbach C."/>
            <person name="Sekiguchi K."/>
            <person name="Semple C.A."/>
            <person name="Seno S."/>
            <person name="Sessa L."/>
            <person name="Sheng Y."/>
            <person name="Shibata Y."/>
            <person name="Shimada H."/>
            <person name="Shimada K."/>
            <person name="Silva D."/>
            <person name="Sinclair B."/>
            <person name="Sperling S."/>
            <person name="Stupka E."/>
            <person name="Sugiura K."/>
            <person name="Sultana R."/>
            <person name="Takenaka Y."/>
            <person name="Taki K."/>
            <person name="Tammoja K."/>
            <person name="Tan S.L."/>
            <person name="Tang S."/>
            <person name="Taylor M.S."/>
            <person name="Tegner J."/>
            <person name="Teichmann S.A."/>
            <person name="Ueda H.R."/>
            <person name="van Nimwegen E."/>
            <person name="Verardo R."/>
            <person name="Wei C.L."/>
            <person name="Yagi K."/>
            <person name="Yamanishi H."/>
            <person name="Zabarovsky E."/>
            <person name="Zhu S."/>
            <person name="Zimmer A."/>
            <person name="Hide W."/>
            <person name="Bult C."/>
            <person name="Grimmond S.M."/>
            <person name="Teasdale R.D."/>
            <person name="Liu E.T."/>
            <person name="Brusic V."/>
            <person name="Quackenbush J."/>
            <person name="Wahlestedt C."/>
            <person name="Mattick J.S."/>
            <person name="Hume D.A."/>
            <person name="Kai C."/>
            <person name="Sasaki D."/>
            <person name="Tomaru Y."/>
            <person name="Fukuda S."/>
            <person name="Kanamori-Katayama M."/>
            <person name="Suzuki M."/>
            <person name="Aoki J."/>
            <person name="Arakawa T."/>
            <person name="Iida J."/>
            <person name="Imamura K."/>
            <person name="Itoh M."/>
            <person name="Kato T."/>
            <person name="Kawaji H."/>
            <person name="Kawagashira N."/>
            <person name="Kawashima T."/>
            <person name="Kojima M."/>
            <person name="Kondo S."/>
            <person name="Konno H."/>
            <person name="Nakano K."/>
            <person name="Ninomiya N."/>
            <person name="Nishio T."/>
            <person name="Okada M."/>
            <person name="Plessy C."/>
            <person name="Shibata K."/>
            <person name="Shiraki T."/>
            <person name="Suzuki S."/>
            <person name="Tagami M."/>
            <person name="Waki K."/>
            <person name="Watahiki A."/>
            <person name="Okamura-Oho Y."/>
            <person name="Suzuki H."/>
            <person name="Kawai J."/>
            <person name="Hayashizaki Y."/>
        </authorList>
    </citation>
    <scope>NUCLEOTIDE SEQUENCE [LARGE SCALE MRNA] (ISOFORMS 2 AND 3)</scope>
    <source>
        <strain>C57BL/6J</strain>
        <tissue>Testis</tissue>
    </source>
</reference>
<reference key="3">
    <citation type="journal article" date="2004" name="Genome Res.">
        <title>The status, quality, and expansion of the NIH full-length cDNA project: the Mammalian Gene Collection (MGC).</title>
        <authorList>
            <consortium name="The MGC Project Team"/>
        </authorList>
    </citation>
    <scope>NUCLEOTIDE SEQUENCE [LARGE SCALE MRNA] (ISOFORM 1)</scope>
    <source>
        <strain>Czech II</strain>
        <strain>FVB/N</strain>
        <tissue>Eye</tissue>
        <tissue>Mammary tumor</tissue>
    </source>
</reference>
<reference key="4">
    <citation type="journal article" date="2009" name="Dev. Cell">
        <title>Scara5 is a ferritin receptor mediating non-transferrin iron delivery.</title>
        <authorList>
            <person name="Li J.Y."/>
            <person name="Paragas N."/>
            <person name="Ned R.M."/>
            <person name="Qiu A."/>
            <person name="Viltard M."/>
            <person name="Leete T."/>
            <person name="Drexler I.R."/>
            <person name="Chen X."/>
            <person name="Sanna-Cherchi S."/>
            <person name="Mohammed F."/>
            <person name="Williams D."/>
            <person name="Lin C.S."/>
            <person name="Schmidt-Ott K.M."/>
            <person name="Andrews N.C."/>
            <person name="Barasch J."/>
        </authorList>
    </citation>
    <scope>FUNCTION</scope>
    <scope>SUBCELLULAR LOCATION</scope>
</reference>
<reference key="5">
    <citation type="journal article" date="2010" name="Cell">
        <title>A tissue-specific atlas of mouse protein phosphorylation and expression.</title>
        <authorList>
            <person name="Huttlin E.L."/>
            <person name="Jedrychowski M.P."/>
            <person name="Elias J.E."/>
            <person name="Goswami T."/>
            <person name="Rad R."/>
            <person name="Beausoleil S.A."/>
            <person name="Villen J."/>
            <person name="Haas W."/>
            <person name="Sowa M.E."/>
            <person name="Gygi S.P."/>
        </authorList>
    </citation>
    <scope>IDENTIFICATION BY MASS SPECTROMETRY [LARGE SCALE ANALYSIS]</scope>
    <source>
        <tissue>Testis</tissue>
    </source>
</reference>
<keyword id="KW-0002">3D-structure</keyword>
<keyword id="KW-0025">Alternative splicing</keyword>
<keyword id="KW-1003">Cell membrane</keyword>
<keyword id="KW-0175">Coiled coil</keyword>
<keyword id="KW-1015">Disulfide bond</keyword>
<keyword id="KW-0325">Glycoprotein</keyword>
<keyword id="KW-0406">Ion transport</keyword>
<keyword id="KW-0408">Iron</keyword>
<keyword id="KW-0410">Iron transport</keyword>
<keyword id="KW-0472">Membrane</keyword>
<keyword id="KW-0675">Receptor</keyword>
<keyword id="KW-1185">Reference proteome</keyword>
<keyword id="KW-0735">Signal-anchor</keyword>
<keyword id="KW-0812">Transmembrane</keyword>
<keyword id="KW-1133">Transmembrane helix</keyword>
<keyword id="KW-0813">Transport</keyword>
<gene>
    <name evidence="1" type="primary">Scara5</name>
</gene>
<dbReference type="EMBL" id="DQ122126">
    <property type="protein sequence ID" value="AAZ41380.1"/>
    <property type="molecule type" value="mRNA"/>
</dbReference>
<dbReference type="EMBL" id="AK016543">
    <property type="protein sequence ID" value="BAB30293.1"/>
    <property type="molecule type" value="mRNA"/>
</dbReference>
<dbReference type="EMBL" id="AK016912">
    <property type="protein sequence ID" value="BAB30492.3"/>
    <property type="molecule type" value="mRNA"/>
</dbReference>
<dbReference type="EMBL" id="AK033154">
    <property type="protein sequence ID" value="BAC28173.1"/>
    <property type="molecule type" value="mRNA"/>
</dbReference>
<dbReference type="EMBL" id="AK133176">
    <property type="protein sequence ID" value="BAE21542.1"/>
    <property type="molecule type" value="mRNA"/>
</dbReference>
<dbReference type="EMBL" id="BC016096">
    <property type="protein sequence ID" value="AAH16096.1"/>
    <property type="molecule type" value="mRNA"/>
</dbReference>
<dbReference type="EMBL" id="BC023907">
    <property type="protein sequence ID" value="AAH23907.1"/>
    <property type="molecule type" value="mRNA"/>
</dbReference>
<dbReference type="EMBL" id="BC026758">
    <property type="protein sequence ID" value="AAH26758.1"/>
    <property type="molecule type" value="mRNA"/>
</dbReference>
<dbReference type="EMBL" id="BC032159">
    <property type="protein sequence ID" value="AAH32159.1"/>
    <property type="molecule type" value="mRNA"/>
</dbReference>
<dbReference type="CCDS" id="CCDS27214.1">
    <molecule id="Q8K299-1"/>
</dbReference>
<dbReference type="CCDS" id="CCDS49523.1">
    <molecule id="Q8K299-2"/>
</dbReference>
<dbReference type="RefSeq" id="NP_001161790.1">
    <molecule id="Q8K299-2"/>
    <property type="nucleotide sequence ID" value="NM_001168318.1"/>
</dbReference>
<dbReference type="RefSeq" id="NP_083179.2">
    <molecule id="Q8K299-1"/>
    <property type="nucleotide sequence ID" value="NM_028903.2"/>
</dbReference>
<dbReference type="RefSeq" id="XP_036014744.1">
    <molecule id="Q8K299-1"/>
    <property type="nucleotide sequence ID" value="XM_036158851.1"/>
</dbReference>
<dbReference type="PDB" id="7BZZ">
    <property type="method" value="X-ray"/>
    <property type="resolution" value="2.50 A"/>
    <property type="chains" value="A/D=384-489"/>
</dbReference>
<dbReference type="PDBsum" id="7BZZ"/>
<dbReference type="SMR" id="Q8K299"/>
<dbReference type="FunCoup" id="Q8K299">
    <property type="interactions" value="164"/>
</dbReference>
<dbReference type="IntAct" id="Q8K299">
    <property type="interactions" value="1"/>
</dbReference>
<dbReference type="STRING" id="10090.ENSMUSP00000022610"/>
<dbReference type="GlyCosmos" id="Q8K299">
    <property type="glycosylation" value="7 sites, No reported glycans"/>
</dbReference>
<dbReference type="GlyGen" id="Q8K299">
    <property type="glycosylation" value="7 sites, 2 N-linked glycans (2 sites)"/>
</dbReference>
<dbReference type="iPTMnet" id="Q8K299"/>
<dbReference type="PhosphoSitePlus" id="Q8K299"/>
<dbReference type="SwissPalm" id="Q8K299"/>
<dbReference type="PaxDb" id="10090-ENSMUSP00000022610"/>
<dbReference type="PeptideAtlas" id="Q8K299"/>
<dbReference type="ProteomicsDB" id="255481">
    <molecule id="Q8K299-1"/>
</dbReference>
<dbReference type="ProteomicsDB" id="255482">
    <molecule id="Q8K299-2"/>
</dbReference>
<dbReference type="ProteomicsDB" id="255483">
    <molecule id="Q8K299-3"/>
</dbReference>
<dbReference type="Pumba" id="Q8K299"/>
<dbReference type="Antibodypedia" id="10358">
    <property type="antibodies" value="186 antibodies from 29 providers"/>
</dbReference>
<dbReference type="DNASU" id="71145"/>
<dbReference type="Ensembl" id="ENSMUST00000022610.15">
    <molecule id="Q8K299-1"/>
    <property type="protein sequence ID" value="ENSMUSP00000022610.9"/>
    <property type="gene ID" value="ENSMUSG00000022032.15"/>
</dbReference>
<dbReference type="Ensembl" id="ENSMUST00000069226.7">
    <molecule id="Q8K299-2"/>
    <property type="protein sequence ID" value="ENSMUSP00000063391.7"/>
    <property type="gene ID" value="ENSMUSG00000022032.15"/>
</dbReference>
<dbReference type="GeneID" id="71145"/>
<dbReference type="KEGG" id="mmu:71145"/>
<dbReference type="UCSC" id="uc007ujm.2">
    <molecule id="Q8K299-2"/>
    <property type="organism name" value="mouse"/>
</dbReference>
<dbReference type="UCSC" id="uc007ujn.2">
    <molecule id="Q8K299-1"/>
    <property type="organism name" value="mouse"/>
</dbReference>
<dbReference type="AGR" id="MGI:1918395"/>
<dbReference type="CTD" id="286133"/>
<dbReference type="MGI" id="MGI:1918395">
    <property type="gene designation" value="Scara5"/>
</dbReference>
<dbReference type="VEuPathDB" id="HostDB:ENSMUSG00000022032"/>
<dbReference type="eggNOG" id="ENOG502QSM1">
    <property type="taxonomic scope" value="Eukaryota"/>
</dbReference>
<dbReference type="GeneTree" id="ENSGT00950000183074"/>
<dbReference type="HOGENOM" id="CLU_041152_1_0_1"/>
<dbReference type="InParanoid" id="Q8K299"/>
<dbReference type="OMA" id="LCDEVST"/>
<dbReference type="OrthoDB" id="536948at2759"/>
<dbReference type="PhylomeDB" id="Q8K299"/>
<dbReference type="TreeFam" id="TF330855"/>
<dbReference type="BioGRID-ORCS" id="71145">
    <property type="hits" value="3 hits in 78 CRISPR screens"/>
</dbReference>
<dbReference type="ChiTaRS" id="Scara5">
    <property type="organism name" value="mouse"/>
</dbReference>
<dbReference type="PRO" id="PR:Q8K299"/>
<dbReference type="Proteomes" id="UP000000589">
    <property type="component" value="Chromosome 14"/>
</dbReference>
<dbReference type="RNAct" id="Q8K299">
    <property type="molecule type" value="protein"/>
</dbReference>
<dbReference type="Bgee" id="ENSMUSG00000022032">
    <property type="expression patterns" value="Expressed in sciatic nerve and 151 other cell types or tissues"/>
</dbReference>
<dbReference type="GO" id="GO:0009986">
    <property type="term" value="C:cell surface"/>
    <property type="evidence" value="ECO:0000314"/>
    <property type="project" value="UniProtKB"/>
</dbReference>
<dbReference type="GO" id="GO:0030666">
    <property type="term" value="C:endocytic vesicle membrane"/>
    <property type="evidence" value="ECO:0000304"/>
    <property type="project" value="Reactome"/>
</dbReference>
<dbReference type="GO" id="GO:0005886">
    <property type="term" value="C:plasma membrane"/>
    <property type="evidence" value="ECO:0000314"/>
    <property type="project" value="UniProtKB"/>
</dbReference>
<dbReference type="GO" id="GO:0070287">
    <property type="term" value="F:ferritin receptor activity"/>
    <property type="evidence" value="ECO:0000314"/>
    <property type="project" value="UniProtKB"/>
</dbReference>
<dbReference type="GO" id="GO:0034605">
    <property type="term" value="P:cellular response to heat"/>
    <property type="evidence" value="ECO:0000314"/>
    <property type="project" value="MGI"/>
</dbReference>
<dbReference type="GO" id="GO:0006897">
    <property type="term" value="P:endocytosis"/>
    <property type="evidence" value="ECO:0000314"/>
    <property type="project" value="UniProtKB"/>
</dbReference>
<dbReference type="GO" id="GO:0006879">
    <property type="term" value="P:intracellular iron ion homeostasis"/>
    <property type="evidence" value="ECO:0000314"/>
    <property type="project" value="UniProtKB"/>
</dbReference>
<dbReference type="GO" id="GO:0034755">
    <property type="term" value="P:iron ion transmembrane transport"/>
    <property type="evidence" value="ECO:0000314"/>
    <property type="project" value="UniProtKB"/>
</dbReference>
<dbReference type="GO" id="GO:0070207">
    <property type="term" value="P:protein homotrimerization"/>
    <property type="evidence" value="ECO:0000353"/>
    <property type="project" value="UniProtKB"/>
</dbReference>
<dbReference type="FunFam" id="3.10.250.10:FF:000011">
    <property type="entry name" value="Scavenger receptor class A member 5"/>
    <property type="match status" value="1"/>
</dbReference>
<dbReference type="Gene3D" id="3.10.250.10">
    <property type="entry name" value="SRCR-like domain"/>
    <property type="match status" value="1"/>
</dbReference>
<dbReference type="HAMAP" id="MF_03070">
    <property type="entry name" value="SCARA5"/>
    <property type="match status" value="1"/>
</dbReference>
<dbReference type="InterPro" id="IPR008160">
    <property type="entry name" value="Collagen"/>
</dbReference>
<dbReference type="InterPro" id="IPR034726">
    <property type="entry name" value="SCARA5"/>
</dbReference>
<dbReference type="InterPro" id="IPR001190">
    <property type="entry name" value="SRCR"/>
</dbReference>
<dbReference type="InterPro" id="IPR036772">
    <property type="entry name" value="SRCR-like_dom_sf"/>
</dbReference>
<dbReference type="PANTHER" id="PTHR48071:SF24">
    <property type="entry name" value="DELETED IN MALIGNANT BRAIN TUMORS 1 PROTEIN-LIKE"/>
    <property type="match status" value="1"/>
</dbReference>
<dbReference type="PANTHER" id="PTHR48071">
    <property type="entry name" value="SRCR DOMAIN-CONTAINING PROTEIN"/>
    <property type="match status" value="1"/>
</dbReference>
<dbReference type="Pfam" id="PF01391">
    <property type="entry name" value="Collagen"/>
    <property type="match status" value="2"/>
</dbReference>
<dbReference type="Pfam" id="PF00530">
    <property type="entry name" value="SRCR"/>
    <property type="match status" value="1"/>
</dbReference>
<dbReference type="PRINTS" id="PR00258">
    <property type="entry name" value="SPERACTRCPTR"/>
</dbReference>
<dbReference type="SMART" id="SM00202">
    <property type="entry name" value="SR"/>
    <property type="match status" value="1"/>
</dbReference>
<dbReference type="SUPFAM" id="SSF56487">
    <property type="entry name" value="SRCR-like"/>
    <property type="match status" value="1"/>
</dbReference>
<dbReference type="PROSITE" id="PS00420">
    <property type="entry name" value="SRCR_1"/>
    <property type="match status" value="1"/>
</dbReference>
<dbReference type="PROSITE" id="PS50287">
    <property type="entry name" value="SRCR_2"/>
    <property type="match status" value="1"/>
</dbReference>
<proteinExistence type="evidence at protein level"/>
<evidence type="ECO:0000255" key="1">
    <source>
        <dbReference type="HAMAP-Rule" id="MF_03070"/>
    </source>
</evidence>
<evidence type="ECO:0000256" key="2">
    <source>
        <dbReference type="SAM" id="MobiDB-lite"/>
    </source>
</evidence>
<evidence type="ECO:0000269" key="3">
    <source>
    </source>
</evidence>
<evidence type="ECO:0000269" key="4">
    <source>
    </source>
</evidence>
<evidence type="ECO:0000303" key="5">
    <source>
    </source>
</evidence>
<evidence type="ECO:0000305" key="6"/>
<evidence type="ECO:0007829" key="7">
    <source>
        <dbReference type="PDB" id="7BZZ"/>
    </source>
</evidence>
<comment type="function">
    <text evidence="1 4">Ferritin receptor that mediates non-transferrin-dependent delivery of iron. Mediates cellular uptake of ferritin-bound iron by stimulating ferritin endocytosis from the cell surface with consequent iron delivery within the cell. Delivery of iron to cells by ferritin is required for the development of specific cell types, suggesting the existence of cell type-specific mechanisms of iron traffic in organogenesis, which alternatively utilize transferrin or non-transferrin iron delivery pathways. Ferritin mediates iron uptake in capsule cells of the developing kidney. Preferentially binds ferritin light chain (FTL) compared to heavy chain (FTH1).</text>
</comment>
<comment type="subunit">
    <text evidence="1 3">Homotrimer.</text>
</comment>
<comment type="subcellular location">
    <subcellularLocation>
        <location evidence="1 4">Cell membrane</location>
        <topology evidence="1 4">Single-pass type II membrane protein</topology>
    </subcellularLocation>
</comment>
<comment type="alternative products">
    <event type="alternative splicing"/>
    <isoform>
        <id>Q8K299-1</id>
        <name>1</name>
        <sequence type="displayed"/>
    </isoform>
    <isoform>
        <id>Q8K299-2</id>
        <name>2</name>
        <sequence type="described" ref="VSP_023477 VSP_023478"/>
    </isoform>
    <isoform>
        <id>Q8K299-3</id>
        <name>3</name>
        <sequence type="described" ref="VSP_023476 VSP_023477 VSP_023478"/>
    </isoform>
</comment>
<comment type="tissue specificity">
    <text evidence="3">Expressed in the testis, trachea, lung, bladder and small intestine; especially in epithelial cells associated with mucosal surfaces.</text>
</comment>
<comment type="similarity">
    <text evidence="1">Belongs to the SCARA5 family.</text>
</comment>
<feature type="chain" id="PRO_0000279519" description="Scavenger receptor class A member 5">
    <location>
        <begin position="1"/>
        <end position="491"/>
    </location>
</feature>
<feature type="topological domain" description="Cytoplasmic" evidence="1">
    <location>
        <begin position="1"/>
        <end position="60"/>
    </location>
</feature>
<feature type="transmembrane region" description="Helical; Signal-anchor for type II membrane protein" evidence="1">
    <location>
        <begin position="61"/>
        <end position="81"/>
    </location>
</feature>
<feature type="topological domain" description="Extracellular" evidence="1">
    <location>
        <begin position="82"/>
        <end position="491"/>
    </location>
</feature>
<feature type="domain" description="Collagen-like" evidence="1">
    <location>
        <begin position="305"/>
        <end position="356"/>
    </location>
</feature>
<feature type="domain" description="SRCR" evidence="1">
    <location>
        <begin position="389"/>
        <end position="489"/>
    </location>
</feature>
<feature type="region of interest" description="Disordered" evidence="2">
    <location>
        <begin position="301"/>
        <end position="380"/>
    </location>
</feature>
<feature type="coiled-coil region" evidence="1">
    <location>
        <begin position="91"/>
        <end position="111"/>
    </location>
</feature>
<feature type="compositionally biased region" description="Low complexity" evidence="2">
    <location>
        <begin position="323"/>
        <end position="334"/>
    </location>
</feature>
<feature type="compositionally biased region" description="Basic and acidic residues" evidence="2">
    <location>
        <begin position="364"/>
        <end position="380"/>
    </location>
</feature>
<feature type="glycosylation site" description="N-linked (GlcNAc...) asparagine" evidence="1">
    <location>
        <position position="102"/>
    </location>
</feature>
<feature type="glycosylation site" description="N-linked (GlcNAc...) asparagine" evidence="1">
    <location>
        <position position="134"/>
    </location>
</feature>
<feature type="glycosylation site" description="N-linked (GlcNAc...) asparagine" evidence="1">
    <location>
        <position position="193"/>
    </location>
</feature>
<feature type="glycosylation site" description="N-linked (GlcNAc...) asparagine" evidence="1">
    <location>
        <position position="231"/>
    </location>
</feature>
<feature type="glycosylation site" description="N-linked (GlcNAc...) asparagine" evidence="1">
    <location>
        <position position="254"/>
    </location>
</feature>
<feature type="glycosylation site" description="N-linked (GlcNAc...) asparagine" evidence="1">
    <location>
        <position position="300"/>
    </location>
</feature>
<feature type="glycosylation site" description="N-linked (GlcNAc...) asparagine" evidence="1">
    <location>
        <position position="393"/>
    </location>
</feature>
<feature type="disulfide bond" evidence="1">
    <location>
        <begin position="414"/>
        <end position="478"/>
    </location>
</feature>
<feature type="disulfide bond" evidence="1">
    <location>
        <begin position="427"/>
        <end position="488"/>
    </location>
</feature>
<feature type="disulfide bond" evidence="1">
    <location>
        <begin position="458"/>
        <end position="468"/>
    </location>
</feature>
<feature type="splice variant" id="VSP_023476" description="In isoform 3." evidence="5">
    <location>
        <begin position="1"/>
        <end position="107"/>
    </location>
</feature>
<feature type="splice variant" id="VSP_023477" description="In isoform 2 and isoform 3." evidence="5">
    <original>GDMDFT</original>
    <variation>ECCRGG</variation>
    <location>
        <begin position="382"/>
        <end position="387"/>
    </location>
</feature>
<feature type="splice variant" id="VSP_023478" description="In isoform 2 and isoform 3." evidence="5">
    <location>
        <begin position="388"/>
        <end position="491"/>
    </location>
</feature>
<feature type="sequence conflict" description="In Ref. 2; BAB30492." evidence="6" ref="2">
    <original>D</original>
    <variation>Y</variation>
    <location>
        <position position="13"/>
    </location>
</feature>
<feature type="sequence conflict" description="In Ref. 3; AAH16096." evidence="6" ref="3">
    <original>M</original>
    <variation>T</variation>
    <location>
        <position position="167"/>
    </location>
</feature>
<feature type="sequence conflict" description="In Ref. 3; AAH26758." evidence="6" ref="3">
    <original>LARR</original>
    <variation>RTRG</variation>
    <location>
        <begin position="209"/>
        <end position="212"/>
    </location>
</feature>
<feature type="sequence conflict" description="In Ref. 2; BAB30492." evidence="6" ref="2">
    <original>VGV</original>
    <variation>MAK</variation>
    <location>
        <begin position="213"/>
        <end position="215"/>
    </location>
</feature>
<feature type="sequence conflict" description="In Ref. 2; BAC28173." evidence="6" ref="2">
    <original>E</original>
    <variation>D</variation>
    <location>
        <position position="376"/>
    </location>
</feature>
<feature type="helix" evidence="7">
    <location>
        <begin position="386"/>
        <end position="388"/>
    </location>
</feature>
<feature type="strand" evidence="7">
    <location>
        <begin position="389"/>
        <end position="396"/>
    </location>
</feature>
<feature type="strand" evidence="7">
    <location>
        <begin position="399"/>
        <end position="406"/>
    </location>
</feature>
<feature type="strand" evidence="7">
    <location>
        <begin position="409"/>
        <end position="414"/>
    </location>
</feature>
<feature type="helix" evidence="7">
    <location>
        <begin position="420"/>
        <end position="429"/>
    </location>
</feature>
<feature type="strand" evidence="7">
    <location>
        <begin position="435"/>
        <end position="439"/>
    </location>
</feature>
<feature type="strand" evidence="7">
    <location>
        <begin position="449"/>
        <end position="453"/>
    </location>
</feature>
<feature type="helix" evidence="7">
    <location>
        <begin position="465"/>
        <end position="467"/>
    </location>
</feature>
<feature type="helix" evidence="7">
    <location>
        <begin position="480"/>
        <end position="482"/>
    </location>
</feature>
<feature type="strand" evidence="7">
    <location>
        <begin position="485"/>
        <end position="488"/>
    </location>
</feature>
<protein>
    <recommendedName>
        <fullName evidence="1">Scavenger receptor class A member 5</fullName>
    </recommendedName>
</protein>
<name>SCAR5_MOUSE</name>
<sequence length="491" mass="53667">MDNKAMYLHTVSDRDNGSIFEEPFDGRSLSKLNLCEDGPCHKRRAGGCCTQLGSLSALKHAVLGLYLLVFLILVGIFILAVSRPRSSPDDLKALTRNVNRLNESLRDMQLRLLQAPLQADLTEQVWKVQDALQNQTDSLLALAGLVQRLEGTLWGLHAQAAQTEQAMALLRDRTGQQSDSAQLELYQLQVESNRSQLLLQRHAGLLDGLARRVGVLGEELADVGGALRGLNHSLSYDVALHSTWLQDLQVLVSNASADTRRMRLVHMDMEMQLKQELATLNVVTEDLRLKDWEHSIALRNITLAKGPPGPKGDQGNEGKEGKPGSPGLPGSRGLPGERGDPGLPGPKGDDGKLGATGPMGMRGFKGDRGPKGEKGERGERAGDMDFTMIRLVNGSGPHQGRVEVFHDRRWGTVCDDGWDKKDGDVVCRMLGFHGVEEVYRTARFGQGTGRIWMDDVNCKGTESSIFHCQFSKWGVTNCGHAEDAGVTCTVP</sequence>